<name>YJJI_ECOLI</name>
<proteinExistence type="evidence at protein level"/>
<reference key="1">
    <citation type="journal article" date="1995" name="Nucleic Acids Res.">
        <title>Analysis of the Escherichia coli genome VI: DNA sequence of the region from 92.8 through 100 minutes.</title>
        <authorList>
            <person name="Burland V.D."/>
            <person name="Plunkett G. III"/>
            <person name="Sofia H.J."/>
            <person name="Daniels D.L."/>
            <person name="Blattner F.R."/>
        </authorList>
    </citation>
    <scope>NUCLEOTIDE SEQUENCE [LARGE SCALE GENOMIC DNA]</scope>
    <source>
        <strain>K12 / MG1655 / ATCC 47076</strain>
    </source>
</reference>
<reference key="2">
    <citation type="journal article" date="1997" name="Science">
        <title>The complete genome sequence of Escherichia coli K-12.</title>
        <authorList>
            <person name="Blattner F.R."/>
            <person name="Plunkett G. III"/>
            <person name="Bloch C.A."/>
            <person name="Perna N.T."/>
            <person name="Burland V."/>
            <person name="Riley M."/>
            <person name="Collado-Vides J."/>
            <person name="Glasner J.D."/>
            <person name="Rode C.K."/>
            <person name="Mayhew G.F."/>
            <person name="Gregor J."/>
            <person name="Davis N.W."/>
            <person name="Kirkpatrick H.A."/>
            <person name="Goeden M.A."/>
            <person name="Rose D.J."/>
            <person name="Mau B."/>
            <person name="Shao Y."/>
        </authorList>
    </citation>
    <scope>NUCLEOTIDE SEQUENCE [LARGE SCALE GENOMIC DNA]</scope>
    <source>
        <strain>K12 / MG1655 / ATCC 47076</strain>
    </source>
</reference>
<reference key="3">
    <citation type="journal article" date="2006" name="Mol. Syst. Biol.">
        <title>Highly accurate genome sequences of Escherichia coli K-12 strains MG1655 and W3110.</title>
        <authorList>
            <person name="Hayashi K."/>
            <person name="Morooka N."/>
            <person name="Yamamoto Y."/>
            <person name="Fujita K."/>
            <person name="Isono K."/>
            <person name="Choi S."/>
            <person name="Ohtsubo E."/>
            <person name="Baba T."/>
            <person name="Wanner B.L."/>
            <person name="Mori H."/>
            <person name="Horiuchi T."/>
        </authorList>
    </citation>
    <scope>NUCLEOTIDE SEQUENCE [LARGE SCALE GENOMIC DNA]</scope>
    <source>
        <strain>K12 / W3110 / ATCC 27325 / DSM 5911</strain>
    </source>
</reference>
<reference key="4">
    <citation type="journal article" date="1982" name="EMBO J.">
        <title>The structure of tandem regulatory regions in the deo operon of Escherichia coli K12.</title>
        <authorList>
            <person name="Valentin-Hansen P."/>
            <person name="Aiba H."/>
            <person name="Schuemperli D."/>
        </authorList>
    </citation>
    <scope>PRELIMINARY NUCLEOTIDE SEQUENCE [GENOMIC DNA] OF 1-167</scope>
    <source>
        <strain>K12</strain>
    </source>
</reference>
<reference key="5">
    <citation type="journal article" date="1986" name="EMBO J.">
        <title>DNA-protein recognition: demonstration of three genetically separated operator elements that are required for repression of the Escherichia coli deoCABD promoters by the DeoR repressor.</title>
        <authorList>
            <person name="Valentin-Hansen P."/>
            <person name="Albrechtsen B."/>
            <person name="Love-Larsen J.E."/>
        </authorList>
    </citation>
    <scope>PRELIMINARY NUCLEOTIDE SEQUENCE [GENOMIC DNA] OF 1-289</scope>
</reference>
<protein>
    <recommendedName>
        <fullName>Uncharacterized protein YjjI</fullName>
    </recommendedName>
</protein>
<sequence>MPTSHENALQQRCQQIVTSPVLSPEQKRHFLALEAENNLPYPQLPAEARRALDEGVICDMFEGHAPYKPRYVLPDYARFLANGSEWLELEGAKDLDDALSLLTILYHHVPSVTSMPVYLGQLDALLQPYVRILTQDEIDVRIKRFWRYLDRTLPDAFMHANIGPSDSPITRAILRADAELKQVSPNLTFIYDPEITPDDLLLEVAKNICECSKPHIANGPVHDKIFTKGGYGIVSCYNSLPLAGGGSTLVRLNLKAIAERSESLDDFFTRTLPHYCQQQIAIIDARCEFLYQQSHFFENSFLVKEGLINPERFVPMFGMYGLAEAVNLLCEKEGIAARYGKEAAANEVGYRISAQLAEFVANTPVKYGWQKRAMLHAQSGISSDIGTTPGARLPYGDEPDPITHLQTVAPHHAYYYSGISDILTLDETIKRNPQALVQLCLGAFKAGMREFTANVSGNDLVRVTGYMVRLSDLEKYRAEGSRTNTTWLGEEAARNTRILERQPRVISHEQQMRFSQ</sequence>
<evidence type="ECO:0000305" key="1"/>
<keyword id="KW-1185">Reference proteome</keyword>
<accession>P37342</accession>
<accession>P37341</accession>
<accession>Q2M5T7</accession>
<dbReference type="EMBL" id="U14003">
    <property type="protein sequence ID" value="AAA97276.1"/>
    <property type="molecule type" value="Genomic_DNA"/>
</dbReference>
<dbReference type="EMBL" id="U00096">
    <property type="protein sequence ID" value="AAC77333.1"/>
    <property type="molecule type" value="Genomic_DNA"/>
</dbReference>
<dbReference type="EMBL" id="AP009048">
    <property type="protein sequence ID" value="BAE78369.1"/>
    <property type="molecule type" value="Genomic_DNA"/>
</dbReference>
<dbReference type="EMBL" id="X03224">
    <property type="status" value="NOT_ANNOTATED_CDS"/>
    <property type="molecule type" value="Genomic_DNA"/>
</dbReference>
<dbReference type="EMBL" id="X04151">
    <property type="status" value="NOT_ANNOTATED_CDS"/>
    <property type="molecule type" value="Genomic_DNA"/>
</dbReference>
<dbReference type="PIR" id="S56604">
    <property type="entry name" value="S56604"/>
</dbReference>
<dbReference type="RefSeq" id="NP_418797.1">
    <property type="nucleotide sequence ID" value="NC_000913.3"/>
</dbReference>
<dbReference type="RefSeq" id="WP_001143253.1">
    <property type="nucleotide sequence ID" value="NZ_STEB01000033.1"/>
</dbReference>
<dbReference type="SMR" id="P37342"/>
<dbReference type="BioGRID" id="4261381">
    <property type="interactions" value="8"/>
</dbReference>
<dbReference type="DIP" id="DIP-12653N"/>
<dbReference type="FunCoup" id="P37342">
    <property type="interactions" value="66"/>
</dbReference>
<dbReference type="IntAct" id="P37342">
    <property type="interactions" value="3"/>
</dbReference>
<dbReference type="STRING" id="511145.b4380"/>
<dbReference type="jPOST" id="P37342"/>
<dbReference type="PaxDb" id="511145-b4380"/>
<dbReference type="EnsemblBacteria" id="AAC77333">
    <property type="protein sequence ID" value="AAC77333"/>
    <property type="gene ID" value="b4380"/>
</dbReference>
<dbReference type="GeneID" id="948904"/>
<dbReference type="KEGG" id="ecj:JW4343"/>
<dbReference type="KEGG" id="eco:b4380"/>
<dbReference type="KEGG" id="ecoc:C3026_23665"/>
<dbReference type="PATRIC" id="fig|511145.12.peg.4527"/>
<dbReference type="EchoBASE" id="EB2089"/>
<dbReference type="eggNOG" id="COG1328">
    <property type="taxonomic scope" value="Bacteria"/>
</dbReference>
<dbReference type="HOGENOM" id="CLU_046504_1_0_6"/>
<dbReference type="InParanoid" id="P37342"/>
<dbReference type="OMA" id="RFWIMLD"/>
<dbReference type="OrthoDB" id="6189458at2"/>
<dbReference type="PhylomeDB" id="P37342"/>
<dbReference type="BioCyc" id="EcoCyc:EG12171-MONOMER"/>
<dbReference type="PRO" id="PR:P37342"/>
<dbReference type="Proteomes" id="UP000000625">
    <property type="component" value="Chromosome"/>
</dbReference>
<dbReference type="GO" id="GO:0009061">
    <property type="term" value="P:anaerobic respiration"/>
    <property type="evidence" value="ECO:0000315"/>
    <property type="project" value="EcoCyc"/>
</dbReference>
<dbReference type="FunFam" id="3.20.70.20:FF:000013">
    <property type="entry name" value="YjjI family glycine radical enzyme"/>
    <property type="match status" value="1"/>
</dbReference>
<dbReference type="Gene3D" id="3.20.70.20">
    <property type="match status" value="1"/>
</dbReference>
<dbReference type="InterPro" id="IPR016905">
    <property type="entry name" value="Glycyl_radical_YjjI-like"/>
</dbReference>
<dbReference type="NCBIfam" id="TIGR04040">
    <property type="entry name" value="glycyl_YjjI"/>
    <property type="match status" value="1"/>
</dbReference>
<dbReference type="Pfam" id="PF11230">
    <property type="entry name" value="YjjI-like"/>
    <property type="match status" value="1"/>
</dbReference>
<dbReference type="PIRSF" id="PIRSF028991">
    <property type="entry name" value="Glycl_rad_HI0521_prd"/>
    <property type="match status" value="1"/>
</dbReference>
<dbReference type="SUPFAM" id="SSF51998">
    <property type="entry name" value="PFL-like glycyl radical enzymes"/>
    <property type="match status" value="1"/>
</dbReference>
<organism>
    <name type="scientific">Escherichia coli (strain K12)</name>
    <dbReference type="NCBI Taxonomy" id="83333"/>
    <lineage>
        <taxon>Bacteria</taxon>
        <taxon>Pseudomonadati</taxon>
        <taxon>Pseudomonadota</taxon>
        <taxon>Gammaproteobacteria</taxon>
        <taxon>Enterobacterales</taxon>
        <taxon>Enterobacteriaceae</taxon>
        <taxon>Escherichia</taxon>
    </lineage>
</organism>
<comment type="interaction">
    <interactant intactId="EBI-548519">
        <id>P37342</id>
    </interactant>
    <interactant intactId="EBI-542092">
        <id>P0A6Y8</id>
        <label>dnaK</label>
    </interactant>
    <organismsDiffer>false</organismsDiffer>
    <experiments>2</experiments>
</comment>
<comment type="similarity">
    <text evidence="1">To H.influenzae HI_0521.</text>
</comment>
<gene>
    <name type="primary">yjjI</name>
    <name type="synonym">yjjH</name>
    <name type="ordered locus">b4380</name>
    <name type="ordered locus">JW4343</name>
</gene>
<feature type="chain" id="PRO_0000169807" description="Uncharacterized protein YjjI">
    <location>
        <begin position="1"/>
        <end position="516"/>
    </location>
</feature>